<reference key="1">
    <citation type="submission" date="2008-06" db="EMBL/GenBank/DDBJ databases">
        <title>Complete sequence of Pelodictyon phaeoclathratiforme BU-1.</title>
        <authorList>
            <consortium name="US DOE Joint Genome Institute"/>
            <person name="Lucas S."/>
            <person name="Copeland A."/>
            <person name="Lapidus A."/>
            <person name="Glavina del Rio T."/>
            <person name="Dalin E."/>
            <person name="Tice H."/>
            <person name="Bruce D."/>
            <person name="Goodwin L."/>
            <person name="Pitluck S."/>
            <person name="Schmutz J."/>
            <person name="Larimer F."/>
            <person name="Land M."/>
            <person name="Hauser L."/>
            <person name="Kyrpides N."/>
            <person name="Mikhailova N."/>
            <person name="Liu Z."/>
            <person name="Li T."/>
            <person name="Zhao F."/>
            <person name="Overmann J."/>
            <person name="Bryant D.A."/>
            <person name="Richardson P."/>
        </authorList>
    </citation>
    <scope>NUCLEOTIDE SEQUENCE [LARGE SCALE GENOMIC DNA]</scope>
    <source>
        <strain>DSM 5477 / BU-1</strain>
    </source>
</reference>
<proteinExistence type="inferred from homology"/>
<evidence type="ECO:0000255" key="1">
    <source>
        <dbReference type="HAMAP-Rule" id="MF_00391"/>
    </source>
</evidence>
<evidence type="ECO:0000256" key="2">
    <source>
        <dbReference type="SAM" id="MobiDB-lite"/>
    </source>
</evidence>
<evidence type="ECO:0000305" key="3"/>
<feature type="chain" id="PRO_1000196082" description="Large ribosomal subunit protein bL34">
    <location>
        <begin position="1"/>
        <end position="53"/>
    </location>
</feature>
<feature type="region of interest" description="Disordered" evidence="2">
    <location>
        <begin position="1"/>
        <end position="53"/>
    </location>
</feature>
<feature type="compositionally biased region" description="Basic residues" evidence="2">
    <location>
        <begin position="1"/>
        <end position="16"/>
    </location>
</feature>
<feature type="compositionally biased region" description="Basic residues" evidence="2">
    <location>
        <begin position="26"/>
        <end position="40"/>
    </location>
</feature>
<feature type="compositionally biased region" description="Polar residues" evidence="2">
    <location>
        <begin position="42"/>
        <end position="53"/>
    </location>
</feature>
<keyword id="KW-1185">Reference proteome</keyword>
<keyword id="KW-0687">Ribonucleoprotein</keyword>
<keyword id="KW-0689">Ribosomal protein</keyword>
<protein>
    <recommendedName>
        <fullName evidence="1">Large ribosomal subunit protein bL34</fullName>
    </recommendedName>
    <alternativeName>
        <fullName evidence="3">50S ribosomal protein L34</fullName>
    </alternativeName>
</protein>
<sequence length="53" mass="6128">MKRTYQPRNRKRRNKHGFRERMSTKNGRKVLSARRAKGRHSLSVSSAMGTAGQ</sequence>
<accession>B4SHH3</accession>
<organism>
    <name type="scientific">Pelodictyon phaeoclathratiforme (strain DSM 5477 / BU-1)</name>
    <dbReference type="NCBI Taxonomy" id="324925"/>
    <lineage>
        <taxon>Bacteria</taxon>
        <taxon>Pseudomonadati</taxon>
        <taxon>Chlorobiota</taxon>
        <taxon>Chlorobiia</taxon>
        <taxon>Chlorobiales</taxon>
        <taxon>Chlorobiaceae</taxon>
        <taxon>Chlorobium/Pelodictyon group</taxon>
        <taxon>Pelodictyon</taxon>
    </lineage>
</organism>
<dbReference type="EMBL" id="CP001110">
    <property type="protein sequence ID" value="ACF45066.1"/>
    <property type="molecule type" value="Genomic_DNA"/>
</dbReference>
<dbReference type="RefSeq" id="WP_012509534.1">
    <property type="nucleotide sequence ID" value="NC_011060.1"/>
</dbReference>
<dbReference type="SMR" id="B4SHH3"/>
<dbReference type="STRING" id="324925.Ppha_2924"/>
<dbReference type="KEGG" id="pph:Ppha_2924"/>
<dbReference type="eggNOG" id="COG0230">
    <property type="taxonomic scope" value="Bacteria"/>
</dbReference>
<dbReference type="HOGENOM" id="CLU_129938_2_0_10"/>
<dbReference type="OrthoDB" id="9804164at2"/>
<dbReference type="Proteomes" id="UP000002724">
    <property type="component" value="Chromosome"/>
</dbReference>
<dbReference type="GO" id="GO:1990904">
    <property type="term" value="C:ribonucleoprotein complex"/>
    <property type="evidence" value="ECO:0007669"/>
    <property type="project" value="UniProtKB-KW"/>
</dbReference>
<dbReference type="GO" id="GO:0005840">
    <property type="term" value="C:ribosome"/>
    <property type="evidence" value="ECO:0007669"/>
    <property type="project" value="UniProtKB-KW"/>
</dbReference>
<dbReference type="GO" id="GO:0003735">
    <property type="term" value="F:structural constituent of ribosome"/>
    <property type="evidence" value="ECO:0007669"/>
    <property type="project" value="InterPro"/>
</dbReference>
<dbReference type="GO" id="GO:0006412">
    <property type="term" value="P:translation"/>
    <property type="evidence" value="ECO:0007669"/>
    <property type="project" value="UniProtKB-UniRule"/>
</dbReference>
<dbReference type="FunFam" id="1.10.287.3980:FF:000001">
    <property type="entry name" value="Mitochondrial ribosomal protein L34"/>
    <property type="match status" value="1"/>
</dbReference>
<dbReference type="Gene3D" id="1.10.287.3980">
    <property type="match status" value="1"/>
</dbReference>
<dbReference type="HAMAP" id="MF_00391">
    <property type="entry name" value="Ribosomal_bL34"/>
    <property type="match status" value="1"/>
</dbReference>
<dbReference type="InterPro" id="IPR000271">
    <property type="entry name" value="Ribosomal_bL34"/>
</dbReference>
<dbReference type="InterPro" id="IPR020939">
    <property type="entry name" value="Ribosomal_bL34_CS"/>
</dbReference>
<dbReference type="NCBIfam" id="TIGR01030">
    <property type="entry name" value="rpmH_bact"/>
    <property type="match status" value="1"/>
</dbReference>
<dbReference type="PANTHER" id="PTHR14503:SF4">
    <property type="entry name" value="LARGE RIBOSOMAL SUBUNIT PROTEIN BL34M"/>
    <property type="match status" value="1"/>
</dbReference>
<dbReference type="PANTHER" id="PTHR14503">
    <property type="entry name" value="MITOCHONDRIAL RIBOSOMAL PROTEIN 34 FAMILY MEMBER"/>
    <property type="match status" value="1"/>
</dbReference>
<dbReference type="Pfam" id="PF00468">
    <property type="entry name" value="Ribosomal_L34"/>
    <property type="match status" value="1"/>
</dbReference>
<dbReference type="PROSITE" id="PS00784">
    <property type="entry name" value="RIBOSOMAL_L34"/>
    <property type="match status" value="1"/>
</dbReference>
<gene>
    <name evidence="1" type="primary">rpmH</name>
    <name type="ordered locus">Ppha_2924</name>
</gene>
<comment type="similarity">
    <text evidence="1">Belongs to the bacterial ribosomal protein bL34 family.</text>
</comment>
<name>RL34_PELPB</name>